<reference key="1">
    <citation type="journal article" date="2009" name="PLoS ONE">
        <title>Genome degradation in Brucella ovis corresponds with narrowing of its host range and tissue tropism.</title>
        <authorList>
            <person name="Tsolis R.M."/>
            <person name="Seshadri R."/>
            <person name="Santos R.L."/>
            <person name="Sangari F.J."/>
            <person name="Lobo J.M."/>
            <person name="de Jong M.F."/>
            <person name="Ren Q."/>
            <person name="Myers G."/>
            <person name="Brinkac L.M."/>
            <person name="Nelson W.C."/>
            <person name="Deboy R.T."/>
            <person name="Angiuoli S."/>
            <person name="Khouri H."/>
            <person name="Dimitrov G."/>
            <person name="Robinson J.R."/>
            <person name="Mulligan S."/>
            <person name="Walker R.L."/>
            <person name="Elzer P.E."/>
            <person name="Hassan K.A."/>
            <person name="Paulsen I.T."/>
        </authorList>
    </citation>
    <scope>NUCLEOTIDE SEQUENCE [LARGE SCALE GENOMIC DNA]</scope>
    <source>
        <strain>ATCC 25840 / 63/290 / NCTC 10512</strain>
    </source>
</reference>
<gene>
    <name evidence="1" type="primary">rpmB</name>
    <name type="ordered locus">BOV_1939</name>
</gene>
<feature type="chain" id="PRO_1000007184" description="Large ribosomal subunit protein bL28">
    <location>
        <begin position="1"/>
        <end position="97"/>
    </location>
</feature>
<name>RL28_BRUO2</name>
<protein>
    <recommendedName>
        <fullName evidence="1">Large ribosomal subunit protein bL28</fullName>
    </recommendedName>
    <alternativeName>
        <fullName evidence="2">50S ribosomal protein L28</fullName>
    </alternativeName>
</protein>
<proteinExistence type="inferred from homology"/>
<comment type="similarity">
    <text evidence="1">Belongs to the bacterial ribosomal protein bL28 family.</text>
</comment>
<accession>A5VSY2</accession>
<evidence type="ECO:0000255" key="1">
    <source>
        <dbReference type="HAMAP-Rule" id="MF_00373"/>
    </source>
</evidence>
<evidence type="ECO:0000305" key="2"/>
<dbReference type="EMBL" id="CP000708">
    <property type="protein sequence ID" value="ABQ60460.1"/>
    <property type="molecule type" value="Genomic_DNA"/>
</dbReference>
<dbReference type="RefSeq" id="WP_006014357.1">
    <property type="nucleotide sequence ID" value="NC_009505.1"/>
</dbReference>
<dbReference type="SMR" id="A5VSY2"/>
<dbReference type="GeneID" id="45125273"/>
<dbReference type="KEGG" id="bov:BOV_1939"/>
<dbReference type="HOGENOM" id="CLU_064548_4_2_5"/>
<dbReference type="Proteomes" id="UP000006383">
    <property type="component" value="Chromosome I"/>
</dbReference>
<dbReference type="GO" id="GO:0022625">
    <property type="term" value="C:cytosolic large ribosomal subunit"/>
    <property type="evidence" value="ECO:0007669"/>
    <property type="project" value="TreeGrafter"/>
</dbReference>
<dbReference type="GO" id="GO:0003735">
    <property type="term" value="F:structural constituent of ribosome"/>
    <property type="evidence" value="ECO:0007669"/>
    <property type="project" value="InterPro"/>
</dbReference>
<dbReference type="GO" id="GO:0006412">
    <property type="term" value="P:translation"/>
    <property type="evidence" value="ECO:0007669"/>
    <property type="project" value="UniProtKB-UniRule"/>
</dbReference>
<dbReference type="Gene3D" id="2.30.170.40">
    <property type="entry name" value="Ribosomal protein L28/L24"/>
    <property type="match status" value="1"/>
</dbReference>
<dbReference type="HAMAP" id="MF_00373">
    <property type="entry name" value="Ribosomal_bL28"/>
    <property type="match status" value="1"/>
</dbReference>
<dbReference type="InterPro" id="IPR026569">
    <property type="entry name" value="Ribosomal_bL28"/>
</dbReference>
<dbReference type="InterPro" id="IPR034704">
    <property type="entry name" value="Ribosomal_bL28/bL31-like_sf"/>
</dbReference>
<dbReference type="InterPro" id="IPR001383">
    <property type="entry name" value="Ribosomal_bL28_bact-type"/>
</dbReference>
<dbReference type="InterPro" id="IPR037147">
    <property type="entry name" value="Ribosomal_bL28_sf"/>
</dbReference>
<dbReference type="NCBIfam" id="TIGR00009">
    <property type="entry name" value="L28"/>
    <property type="match status" value="1"/>
</dbReference>
<dbReference type="PANTHER" id="PTHR13528">
    <property type="entry name" value="39S RIBOSOMAL PROTEIN L28, MITOCHONDRIAL"/>
    <property type="match status" value="1"/>
</dbReference>
<dbReference type="PANTHER" id="PTHR13528:SF2">
    <property type="entry name" value="LARGE RIBOSOMAL SUBUNIT PROTEIN BL28M"/>
    <property type="match status" value="1"/>
</dbReference>
<dbReference type="Pfam" id="PF00830">
    <property type="entry name" value="Ribosomal_L28"/>
    <property type="match status" value="1"/>
</dbReference>
<dbReference type="SUPFAM" id="SSF143800">
    <property type="entry name" value="L28p-like"/>
    <property type="match status" value="1"/>
</dbReference>
<organism>
    <name type="scientific">Brucella ovis (strain ATCC 25840 / 63/290 / NCTC 10512)</name>
    <dbReference type="NCBI Taxonomy" id="444178"/>
    <lineage>
        <taxon>Bacteria</taxon>
        <taxon>Pseudomonadati</taxon>
        <taxon>Pseudomonadota</taxon>
        <taxon>Alphaproteobacteria</taxon>
        <taxon>Hyphomicrobiales</taxon>
        <taxon>Brucellaceae</taxon>
        <taxon>Brucella/Ochrobactrum group</taxon>
        <taxon>Brucella</taxon>
    </lineage>
</organism>
<keyword id="KW-0687">Ribonucleoprotein</keyword>
<keyword id="KW-0689">Ribosomal protein</keyword>
<sequence>MSRACELTGKSVQYGNNVSHANNRTRCRFLPNLCNVTLISETLGQSYRLRISANALRSVEHRGGLDAFLVKSDDKELSQRARLLKRQIAKKQAEAAA</sequence>